<reference key="1">
    <citation type="journal article" date="2009" name="PLoS Genet.">
        <title>Organised genome dynamics in the Escherichia coli species results in highly diverse adaptive paths.</title>
        <authorList>
            <person name="Touchon M."/>
            <person name="Hoede C."/>
            <person name="Tenaillon O."/>
            <person name="Barbe V."/>
            <person name="Baeriswyl S."/>
            <person name="Bidet P."/>
            <person name="Bingen E."/>
            <person name="Bonacorsi S."/>
            <person name="Bouchier C."/>
            <person name="Bouvet O."/>
            <person name="Calteau A."/>
            <person name="Chiapello H."/>
            <person name="Clermont O."/>
            <person name="Cruveiller S."/>
            <person name="Danchin A."/>
            <person name="Diard M."/>
            <person name="Dossat C."/>
            <person name="Karoui M.E."/>
            <person name="Frapy E."/>
            <person name="Garry L."/>
            <person name="Ghigo J.M."/>
            <person name="Gilles A.M."/>
            <person name="Johnson J."/>
            <person name="Le Bouguenec C."/>
            <person name="Lescat M."/>
            <person name="Mangenot S."/>
            <person name="Martinez-Jehanne V."/>
            <person name="Matic I."/>
            <person name="Nassif X."/>
            <person name="Oztas S."/>
            <person name="Petit M.A."/>
            <person name="Pichon C."/>
            <person name="Rouy Z."/>
            <person name="Ruf C.S."/>
            <person name="Schneider D."/>
            <person name="Tourret J."/>
            <person name="Vacherie B."/>
            <person name="Vallenet D."/>
            <person name="Medigue C."/>
            <person name="Rocha E.P.C."/>
            <person name="Denamur E."/>
        </authorList>
    </citation>
    <scope>NUCLEOTIDE SEQUENCE [LARGE SCALE GENOMIC DNA]</scope>
    <source>
        <strain>IAI39 / ExPEC</strain>
    </source>
</reference>
<organism>
    <name type="scientific">Escherichia coli O7:K1 (strain IAI39 / ExPEC)</name>
    <dbReference type="NCBI Taxonomy" id="585057"/>
    <lineage>
        <taxon>Bacteria</taxon>
        <taxon>Pseudomonadati</taxon>
        <taxon>Pseudomonadota</taxon>
        <taxon>Gammaproteobacteria</taxon>
        <taxon>Enterobacterales</taxon>
        <taxon>Enterobacteriaceae</taxon>
        <taxon>Escherichia</taxon>
    </lineage>
</organism>
<accession>B7NMX6</accession>
<protein>
    <recommendedName>
        <fullName evidence="1">Pyrimidine-specific ribonucleoside hydrolase RihB</fullName>
        <ecNumber evidence="1">3.2.2.8</ecNumber>
    </recommendedName>
    <alternativeName>
        <fullName evidence="1">Cytidine/uridine-specific hydrolase</fullName>
    </alternativeName>
</protein>
<feature type="chain" id="PRO_1000145829" description="Pyrimidine-specific ribonucleoside hydrolase RihB">
    <location>
        <begin position="1"/>
        <end position="313"/>
    </location>
</feature>
<feature type="active site" description="Proton acceptor" evidence="1">
    <location>
        <position position="11"/>
    </location>
</feature>
<feature type="binding site" evidence="1">
    <location>
        <position position="11"/>
    </location>
    <ligand>
        <name>Ca(2+)</name>
        <dbReference type="ChEBI" id="CHEBI:29108"/>
    </ligand>
</feature>
<feature type="binding site" evidence="1">
    <location>
        <position position="16"/>
    </location>
    <ligand>
        <name>Ca(2+)</name>
        <dbReference type="ChEBI" id="CHEBI:29108"/>
    </ligand>
</feature>
<feature type="binding site" evidence="1">
    <location>
        <position position="124"/>
    </location>
    <ligand>
        <name>Ca(2+)</name>
        <dbReference type="ChEBI" id="CHEBI:29108"/>
    </ligand>
</feature>
<feature type="binding site" evidence="1">
    <location>
        <position position="227"/>
    </location>
    <ligand>
        <name>substrate</name>
    </ligand>
</feature>
<feature type="binding site" evidence="1">
    <location>
        <position position="239"/>
    </location>
    <ligand>
        <name>substrate</name>
    </ligand>
</feature>
<feature type="binding site" evidence="1">
    <location>
        <position position="240"/>
    </location>
    <ligand>
        <name>Ca(2+)</name>
        <dbReference type="ChEBI" id="CHEBI:29108"/>
    </ligand>
</feature>
<gene>
    <name evidence="1" type="primary">rihB</name>
    <name type="ordered locus">ECIAI39_2302</name>
</gene>
<evidence type="ECO:0000255" key="1">
    <source>
        <dbReference type="HAMAP-Rule" id="MF_01433"/>
    </source>
</evidence>
<sequence>MEKRKIILDCDPGHDDAIAMMMAAKHPAIDLLGITIVAGNQTLDKTLINGLNVCQKLEINVPVYAGMPQPIMRQQIVADNIHGETGLDGPVFEPLTRQAESTHAVKYIIDTLMASDGDITLVPVGPLSNIAVAMRMQPAILPKIREIVLMGGAYGTGNFTPSAEFNIFADPEAARVVFTSGVPLVMMGLDLTNQTVCTPDVIARMERAGGPAGELFSDIMNFTLKTQFENYGLAGGPVHDATCIGYLINPDGIKTQEMYVEVDVNSGPCYGRTVCDELGVLGKPANTKVGITIDTDWFWGLVEECVRGYIKTH</sequence>
<dbReference type="EC" id="3.2.2.8" evidence="1"/>
<dbReference type="EMBL" id="CU928164">
    <property type="protein sequence ID" value="CAR18428.1"/>
    <property type="molecule type" value="Genomic_DNA"/>
</dbReference>
<dbReference type="RefSeq" id="WP_000415455.1">
    <property type="nucleotide sequence ID" value="NC_011750.1"/>
</dbReference>
<dbReference type="RefSeq" id="YP_002408262.1">
    <property type="nucleotide sequence ID" value="NC_011750.1"/>
</dbReference>
<dbReference type="SMR" id="B7NMX6"/>
<dbReference type="STRING" id="585057.ECIAI39_2302"/>
<dbReference type="GeneID" id="75206415"/>
<dbReference type="KEGG" id="ect:ECIAI39_2302"/>
<dbReference type="PATRIC" id="fig|585057.6.peg.2397"/>
<dbReference type="HOGENOM" id="CLU_036838_2_0_6"/>
<dbReference type="Proteomes" id="UP000000749">
    <property type="component" value="Chromosome"/>
</dbReference>
<dbReference type="GO" id="GO:0005829">
    <property type="term" value="C:cytosol"/>
    <property type="evidence" value="ECO:0007669"/>
    <property type="project" value="TreeGrafter"/>
</dbReference>
<dbReference type="GO" id="GO:0005509">
    <property type="term" value="F:calcium ion binding"/>
    <property type="evidence" value="ECO:0007669"/>
    <property type="project" value="UniProtKB-UniRule"/>
</dbReference>
<dbReference type="GO" id="GO:0008477">
    <property type="term" value="F:purine nucleosidase activity"/>
    <property type="evidence" value="ECO:0007669"/>
    <property type="project" value="TreeGrafter"/>
</dbReference>
<dbReference type="GO" id="GO:0045437">
    <property type="term" value="F:uridine nucleosidase activity"/>
    <property type="evidence" value="ECO:0007669"/>
    <property type="project" value="UniProtKB-ARBA"/>
</dbReference>
<dbReference type="GO" id="GO:0006152">
    <property type="term" value="P:purine nucleoside catabolic process"/>
    <property type="evidence" value="ECO:0007669"/>
    <property type="project" value="TreeGrafter"/>
</dbReference>
<dbReference type="GO" id="GO:0006206">
    <property type="term" value="P:pyrimidine nucleobase metabolic process"/>
    <property type="evidence" value="ECO:0007669"/>
    <property type="project" value="UniProtKB-UniRule"/>
</dbReference>
<dbReference type="GO" id="GO:0046133">
    <property type="term" value="P:pyrimidine ribonucleoside catabolic process"/>
    <property type="evidence" value="ECO:0007669"/>
    <property type="project" value="InterPro"/>
</dbReference>
<dbReference type="CDD" id="cd02651">
    <property type="entry name" value="nuc_hydro_IU_UC_XIUA"/>
    <property type="match status" value="1"/>
</dbReference>
<dbReference type="FunFam" id="3.90.245.10:FF:000003">
    <property type="entry name" value="Pyrimidine-specific ribonucleoside hydrolase RihB"/>
    <property type="match status" value="1"/>
</dbReference>
<dbReference type="Gene3D" id="3.90.245.10">
    <property type="entry name" value="Ribonucleoside hydrolase-like"/>
    <property type="match status" value="1"/>
</dbReference>
<dbReference type="HAMAP" id="MF_01433">
    <property type="entry name" value="Pyrim_hydro_RihB"/>
    <property type="match status" value="1"/>
</dbReference>
<dbReference type="InterPro" id="IPR015910">
    <property type="entry name" value="I/U_nuclsd_hydro_CS"/>
</dbReference>
<dbReference type="InterPro" id="IPR001910">
    <property type="entry name" value="Inosine/uridine_hydrolase_dom"/>
</dbReference>
<dbReference type="InterPro" id="IPR023186">
    <property type="entry name" value="IUNH"/>
</dbReference>
<dbReference type="InterPro" id="IPR022977">
    <property type="entry name" value="Pyrim_hydro_RihB"/>
</dbReference>
<dbReference type="InterPro" id="IPR036452">
    <property type="entry name" value="Ribo_hydro-like"/>
</dbReference>
<dbReference type="NCBIfam" id="NF007417">
    <property type="entry name" value="PRK09955.1"/>
    <property type="match status" value="1"/>
</dbReference>
<dbReference type="PANTHER" id="PTHR12304">
    <property type="entry name" value="INOSINE-URIDINE PREFERRING NUCLEOSIDE HYDROLASE"/>
    <property type="match status" value="1"/>
</dbReference>
<dbReference type="PANTHER" id="PTHR12304:SF4">
    <property type="entry name" value="URIDINE NUCLEOSIDASE"/>
    <property type="match status" value="1"/>
</dbReference>
<dbReference type="Pfam" id="PF01156">
    <property type="entry name" value="IU_nuc_hydro"/>
    <property type="match status" value="1"/>
</dbReference>
<dbReference type="SUPFAM" id="SSF53590">
    <property type="entry name" value="Nucleoside hydrolase"/>
    <property type="match status" value="1"/>
</dbReference>
<dbReference type="PROSITE" id="PS01247">
    <property type="entry name" value="IUNH"/>
    <property type="match status" value="1"/>
</dbReference>
<comment type="function">
    <text evidence="1">Hydrolyzes cytidine or uridine to ribose and cytosine or uracil, respectively. Has a clear preference for cytidine over uridine. Strictly specific for ribonucleosides.</text>
</comment>
<comment type="catalytic activity">
    <reaction evidence="1">
        <text>a pyrimidine ribonucleoside + H2O = a pyrimidine nucleobase + D-ribose</text>
        <dbReference type="Rhea" id="RHEA:56816"/>
        <dbReference type="ChEBI" id="CHEBI:15377"/>
        <dbReference type="ChEBI" id="CHEBI:26432"/>
        <dbReference type="ChEBI" id="CHEBI:47013"/>
        <dbReference type="ChEBI" id="CHEBI:141014"/>
        <dbReference type="EC" id="3.2.2.8"/>
    </reaction>
</comment>
<comment type="cofactor">
    <cofactor evidence="1">
        <name>Ca(2+)</name>
        <dbReference type="ChEBI" id="CHEBI:29108"/>
    </cofactor>
    <text evidence="1">Binds 1 Ca(2+) ion per monomer.</text>
</comment>
<comment type="subunit">
    <text evidence="1">Homotetramer.</text>
</comment>
<comment type="similarity">
    <text evidence="1">Belongs to the IUNH family. RihB subfamily.</text>
</comment>
<proteinExistence type="inferred from homology"/>
<name>RIHB_ECO7I</name>
<keyword id="KW-0106">Calcium</keyword>
<keyword id="KW-0326">Glycosidase</keyword>
<keyword id="KW-0378">Hydrolase</keyword>
<keyword id="KW-0479">Metal-binding</keyword>